<name>ACCD1_MYCTU</name>
<gene>
    <name evidence="5" type="primary">accD1</name>
    <name evidence="8" type="ordered locus">Rv2502c</name>
</gene>
<sequence>MTTPSIAIAPSFADEHRRLVAELNNKLAAAALGGNERARKRHVSRGKLLPRERVDRLLDPGSPFLELAPLAAGGMYGDESPGAGIITGIGRVSGRQCVIVANDATVKGGTYYPMTVKKHLRAQEVALQNMLPCIYLVDSGGAFLPRQDEVFPDREHFGRIFYNQATMSAKGIPQVAAVLGSCTAGGAYVPAMSDEAVIVREQGTIFLGGPPLVKAATGEIVSAEELGGGDLHSRTSGVTDHLADDDEDALRIVRAIADTFGPCEPAQWDVRRSVEPKYPQAELYDVVPPDPRVPYDVHEVVVRIVDGSEFSEFKAKYGKTLVTAFARVHGHPVGIVANNGVLFSESALKGAHFIELCDKRKIPLLFLQNIAGFMVGRDYEAGGIAKHGAKMVTAVACARVPKLTVVIGGSYGAGNYSMCGRAYSPRFLWMWPNARISVMGGEQAASVLATVRGEQLSAAGTPWSPDEEEAFKAPIRAQYEDQGNPYYSTARLWDDGIIDPADTRTVVGLALSLCAHAPLDQVGYGVFRM</sequence>
<evidence type="ECO:0000255" key="1">
    <source>
        <dbReference type="PROSITE-ProRule" id="PRU01136"/>
    </source>
</evidence>
<evidence type="ECO:0000255" key="2">
    <source>
        <dbReference type="PROSITE-ProRule" id="PRU01137"/>
    </source>
</evidence>
<evidence type="ECO:0000269" key="3">
    <source>
    </source>
</evidence>
<evidence type="ECO:0000269" key="4">
    <source>
    </source>
</evidence>
<evidence type="ECO:0000303" key="5">
    <source>
    </source>
</evidence>
<evidence type="ECO:0000303" key="6">
    <source>
    </source>
</evidence>
<evidence type="ECO:0000305" key="7"/>
<evidence type="ECO:0000312" key="8">
    <source>
        <dbReference type="EMBL" id="CCP45296.1"/>
    </source>
</evidence>
<evidence type="ECO:0007744" key="9">
    <source>
        <dbReference type="PDB" id="4Q0G"/>
    </source>
</evidence>
<evidence type="ECO:0007829" key="10">
    <source>
        <dbReference type="PDB" id="4Q0G"/>
    </source>
</evidence>
<organism>
    <name type="scientific">Mycobacterium tuberculosis (strain ATCC 25618 / H37Rv)</name>
    <dbReference type="NCBI Taxonomy" id="83332"/>
    <lineage>
        <taxon>Bacteria</taxon>
        <taxon>Bacillati</taxon>
        <taxon>Actinomycetota</taxon>
        <taxon>Actinomycetes</taxon>
        <taxon>Mycobacteriales</taxon>
        <taxon>Mycobacteriaceae</taxon>
        <taxon>Mycobacterium</taxon>
        <taxon>Mycobacterium tuberculosis complex</taxon>
    </lineage>
</organism>
<keyword id="KW-0002">3D-structure</keyword>
<keyword id="KW-1185">Reference proteome</keyword>
<keyword id="KW-0808">Transferase</keyword>
<reference key="1">
    <citation type="journal article" date="1998" name="Nature">
        <title>Deciphering the biology of Mycobacterium tuberculosis from the complete genome sequence.</title>
        <authorList>
            <person name="Cole S.T."/>
            <person name="Brosch R."/>
            <person name="Parkhill J."/>
            <person name="Garnier T."/>
            <person name="Churcher C.M."/>
            <person name="Harris D.E."/>
            <person name="Gordon S.V."/>
            <person name="Eiglmeier K."/>
            <person name="Gas S."/>
            <person name="Barry C.E. III"/>
            <person name="Tekaia F."/>
            <person name="Badcock K."/>
            <person name="Basham D."/>
            <person name="Brown D."/>
            <person name="Chillingworth T."/>
            <person name="Connor R."/>
            <person name="Davies R.M."/>
            <person name="Devlin K."/>
            <person name="Feltwell T."/>
            <person name="Gentles S."/>
            <person name="Hamlin N."/>
            <person name="Holroyd S."/>
            <person name="Hornsby T."/>
            <person name="Jagels K."/>
            <person name="Krogh A."/>
            <person name="McLean J."/>
            <person name="Moule S."/>
            <person name="Murphy L.D."/>
            <person name="Oliver S."/>
            <person name="Osborne J."/>
            <person name="Quail M.A."/>
            <person name="Rajandream M.A."/>
            <person name="Rogers J."/>
            <person name="Rutter S."/>
            <person name="Seeger K."/>
            <person name="Skelton S."/>
            <person name="Squares S."/>
            <person name="Squares R."/>
            <person name="Sulston J.E."/>
            <person name="Taylor K."/>
            <person name="Whitehead S."/>
            <person name="Barrell B.G."/>
        </authorList>
    </citation>
    <scope>NUCLEOTIDE SEQUENCE [LARGE SCALE GENOMIC DNA]</scope>
    <source>
        <strain>ATCC 25618 / H37Rv</strain>
    </source>
</reference>
<reference key="2">
    <citation type="journal article" date="2007" name="J. Bacteriol.">
        <title>AccD6, a member of the Fas II locus, is a functional carboxyltransferase subunit of the acyl-coenzyme A carboxylase in Mycobacterium tuberculosis.</title>
        <authorList>
            <person name="Daniel J."/>
            <person name="Oh T.J."/>
            <person name="Lee C.M."/>
            <person name="Kolattukudy P.E."/>
        </authorList>
    </citation>
    <scope>INDUCTION</scope>
    <source>
        <strain>H37Rv</strain>
    </source>
</reference>
<reference key="3">
    <citation type="journal article" date="2011" name="Mol. Cell. Proteomics">
        <title>Proteogenomic analysis of Mycobacterium tuberculosis by high resolution mass spectrometry.</title>
        <authorList>
            <person name="Kelkar D.S."/>
            <person name="Kumar D."/>
            <person name="Kumar P."/>
            <person name="Balakrishnan L."/>
            <person name="Muthusamy B."/>
            <person name="Yadav A.K."/>
            <person name="Shrivastava P."/>
            <person name="Marimuthu A."/>
            <person name="Anand S."/>
            <person name="Sundaram H."/>
            <person name="Kingsbury R."/>
            <person name="Harsha H.C."/>
            <person name="Nair B."/>
            <person name="Prasad T.S."/>
            <person name="Chauhan D.S."/>
            <person name="Katoch K."/>
            <person name="Katoch V.M."/>
            <person name="Kumar P."/>
            <person name="Chaerkady R."/>
            <person name="Ramachandran S."/>
            <person name="Dash D."/>
            <person name="Pandey A."/>
        </authorList>
    </citation>
    <scope>IDENTIFICATION BY MASS SPECTROMETRY [LARGE SCALE ANALYSIS]</scope>
    <source>
        <strain>ATCC 25618 / H37Rv</strain>
    </source>
</reference>
<reference key="4">
    <citation type="journal article" date="2015" name="PLoS Pathog.">
        <title>Characterization of the mycobacterial acyl-CoA carboxylase holo complexes reveals their functional expansion into amino acid catabolism.</title>
        <authorList>
            <person name="Ehebauer M.T."/>
            <person name="Zimmermann M."/>
            <person name="Jakobi A.J."/>
            <person name="Noens E.E."/>
            <person name="Laubitz D."/>
            <person name="Cichocki B."/>
            <person name="Marrakchi H."/>
            <person name="Laneelle M.A."/>
            <person name="Daffe M."/>
            <person name="Sachse C."/>
            <person name="Dziembowski A."/>
            <person name="Sauer U."/>
            <person name="Wilmanns M."/>
        </authorList>
    </citation>
    <scope>FUNCTION</scope>
    <scope>CATALYTIC ACTIVITY</scope>
    <scope>PATHWAY</scope>
    <scope>SUBUNIT</scope>
</reference>
<reference evidence="9" key="5">
    <citation type="submission" date="2014-04" db="PDB data bank">
        <title>Crystal structure of beta subunit of acyl-CoA carboxylase AccD1 from Mycobacterium tuberculosis.</title>
        <authorList>
            <consortium name="TB Structural Genomics Consortium (TBSGC)"/>
            <person name="Bie H.Y."/>
            <person name="Yin J."/>
            <person name="James M.N.G."/>
        </authorList>
    </citation>
    <scope>X-RAY CRYSTALLOGRAPHY (2.31 ANGSTROMS)</scope>
</reference>
<proteinExistence type="evidence at protein level"/>
<dbReference type="EC" id="2.1.3.-" evidence="4"/>
<dbReference type="EMBL" id="AL123456">
    <property type="protein sequence ID" value="CCP45296.1"/>
    <property type="molecule type" value="Genomic_DNA"/>
</dbReference>
<dbReference type="RefSeq" id="NP_217018.1">
    <property type="nucleotide sequence ID" value="NC_000962.3"/>
</dbReference>
<dbReference type="RefSeq" id="WP_003412778.1">
    <property type="nucleotide sequence ID" value="NZ_NVQJ01000063.1"/>
</dbReference>
<dbReference type="PDB" id="4Q0G">
    <property type="method" value="X-ray"/>
    <property type="resolution" value="2.31 A"/>
    <property type="chains" value="A/B/C=1-529"/>
</dbReference>
<dbReference type="PDBsum" id="4Q0G"/>
<dbReference type="SMR" id="I6YDK7"/>
<dbReference type="FunCoup" id="I6YDK7">
    <property type="interactions" value="456"/>
</dbReference>
<dbReference type="STRING" id="83332.Rv2502c"/>
<dbReference type="PaxDb" id="83332-Rv2502c"/>
<dbReference type="DNASU" id="887168"/>
<dbReference type="GeneID" id="887168"/>
<dbReference type="KEGG" id="mtu:Rv2502c"/>
<dbReference type="KEGG" id="mtv:RVBD_2502c"/>
<dbReference type="PATRIC" id="fig|83332.111.peg.2799"/>
<dbReference type="TubercuList" id="Rv2502c"/>
<dbReference type="eggNOG" id="COG4799">
    <property type="taxonomic scope" value="Bacteria"/>
</dbReference>
<dbReference type="InParanoid" id="I6YDK7"/>
<dbReference type="OrthoDB" id="9803706at2"/>
<dbReference type="PhylomeDB" id="I6YDK7"/>
<dbReference type="UniPathway" id="UPA00363"/>
<dbReference type="EvolutionaryTrace" id="I6YDK7"/>
<dbReference type="Proteomes" id="UP000001584">
    <property type="component" value="Chromosome"/>
</dbReference>
<dbReference type="GO" id="GO:1905202">
    <property type="term" value="C:methylcrotonoyl-CoA carboxylase complex"/>
    <property type="evidence" value="ECO:0000318"/>
    <property type="project" value="GO_Central"/>
</dbReference>
<dbReference type="GO" id="GO:0016874">
    <property type="term" value="F:ligase activity"/>
    <property type="evidence" value="ECO:0007669"/>
    <property type="project" value="InterPro"/>
</dbReference>
<dbReference type="GO" id="GO:0016740">
    <property type="term" value="F:transferase activity"/>
    <property type="evidence" value="ECO:0007669"/>
    <property type="project" value="UniProtKB-KW"/>
</dbReference>
<dbReference type="GO" id="GO:0006552">
    <property type="term" value="P:L-leucine catabolic process"/>
    <property type="evidence" value="ECO:0000318"/>
    <property type="project" value="GO_Central"/>
</dbReference>
<dbReference type="FunFam" id="3.90.226.10:FF:000004">
    <property type="entry name" value="Methylcrotonoyl-CoA carboxylase beta chain"/>
    <property type="match status" value="1"/>
</dbReference>
<dbReference type="FunFam" id="3.90.226.10:FF:000007">
    <property type="entry name" value="Methylcrotonoyl-CoA carboxylase subunit beta"/>
    <property type="match status" value="1"/>
</dbReference>
<dbReference type="Gene3D" id="3.90.226.10">
    <property type="entry name" value="2-enoyl-CoA Hydratase, Chain A, domain 1"/>
    <property type="match status" value="2"/>
</dbReference>
<dbReference type="InterPro" id="IPR034733">
    <property type="entry name" value="AcCoA_carboxyl_beta"/>
</dbReference>
<dbReference type="InterPro" id="IPR029045">
    <property type="entry name" value="ClpP/crotonase-like_dom_sf"/>
</dbReference>
<dbReference type="InterPro" id="IPR011763">
    <property type="entry name" value="COA_CT_C"/>
</dbReference>
<dbReference type="InterPro" id="IPR011762">
    <property type="entry name" value="COA_CT_N"/>
</dbReference>
<dbReference type="InterPro" id="IPR045190">
    <property type="entry name" value="MCCB/AccD1-like"/>
</dbReference>
<dbReference type="PANTHER" id="PTHR22855">
    <property type="entry name" value="ACETYL, PROPIONYL, PYRUVATE, AND GLUTACONYL CARBOXYLASE-RELATED"/>
    <property type="match status" value="1"/>
</dbReference>
<dbReference type="PANTHER" id="PTHR22855:SF13">
    <property type="entry name" value="METHYLCROTONOYL-COA CARBOXYLASE BETA CHAIN, MITOCHONDRIAL"/>
    <property type="match status" value="1"/>
</dbReference>
<dbReference type="Pfam" id="PF01039">
    <property type="entry name" value="Carboxyl_trans"/>
    <property type="match status" value="1"/>
</dbReference>
<dbReference type="SUPFAM" id="SSF52096">
    <property type="entry name" value="ClpP/crotonase"/>
    <property type="match status" value="2"/>
</dbReference>
<dbReference type="PROSITE" id="PS50989">
    <property type="entry name" value="COA_CT_CTER"/>
    <property type="match status" value="1"/>
</dbReference>
<dbReference type="PROSITE" id="PS50980">
    <property type="entry name" value="COA_CT_NTER"/>
    <property type="match status" value="1"/>
</dbReference>
<protein>
    <recommendedName>
        <fullName evidence="7">Biotin-dependent 3-methylcrotonyl-coenzyme A carboxylase beta1 subunit</fullName>
    </recommendedName>
    <alternativeName>
        <fullName evidence="6">3-methylcrotonyl-CoA carboxylase</fullName>
        <shortName evidence="6">MCC</shortName>
        <ecNumber evidence="4">2.1.3.-</ecNumber>
    </alternativeName>
</protein>
<feature type="chain" id="PRO_0000452368" description="Biotin-dependent 3-methylcrotonyl-coenzyme A carboxylase beta1 subunit">
    <location>
        <begin position="1"/>
        <end position="529"/>
    </location>
</feature>
<feature type="domain" description="CoA carboxyltransferase N-terminal" evidence="1">
    <location>
        <begin position="16"/>
        <end position="272"/>
    </location>
</feature>
<feature type="domain" description="CoA carboxyltransferase C-terminal" evidence="2">
    <location>
        <begin position="275"/>
        <end position="521"/>
    </location>
</feature>
<feature type="helix" evidence="10">
    <location>
        <begin position="12"/>
        <end position="32"/>
    </location>
</feature>
<feature type="helix" evidence="10">
    <location>
        <begin position="36"/>
        <end position="44"/>
    </location>
</feature>
<feature type="helix" evidence="10">
    <location>
        <begin position="50"/>
        <end position="57"/>
    </location>
</feature>
<feature type="strand" evidence="10">
    <location>
        <begin position="64"/>
        <end position="67"/>
    </location>
</feature>
<feature type="turn" evidence="10">
    <location>
        <begin position="69"/>
        <end position="74"/>
    </location>
</feature>
<feature type="helix" evidence="10">
    <location>
        <begin position="76"/>
        <end position="78"/>
    </location>
</feature>
<feature type="helix" evidence="10">
    <location>
        <begin position="81"/>
        <end position="84"/>
    </location>
</feature>
<feature type="strand" evidence="10">
    <location>
        <begin position="85"/>
        <end position="92"/>
    </location>
</feature>
<feature type="strand" evidence="10">
    <location>
        <begin position="95"/>
        <end position="102"/>
    </location>
</feature>
<feature type="turn" evidence="10">
    <location>
        <begin position="104"/>
        <end position="106"/>
    </location>
</feature>
<feature type="helix" evidence="10">
    <location>
        <begin position="107"/>
        <end position="109"/>
    </location>
</feature>
<feature type="helix" evidence="10">
    <location>
        <begin position="113"/>
        <end position="129"/>
    </location>
</feature>
<feature type="strand" evidence="10">
    <location>
        <begin position="133"/>
        <end position="137"/>
    </location>
</feature>
<feature type="helix" evidence="10">
    <location>
        <begin position="144"/>
        <end position="149"/>
    </location>
</feature>
<feature type="strand" evidence="10">
    <location>
        <begin position="151"/>
        <end position="153"/>
    </location>
</feature>
<feature type="helix" evidence="10">
    <location>
        <begin position="159"/>
        <end position="169"/>
    </location>
</feature>
<feature type="strand" evidence="10">
    <location>
        <begin position="174"/>
        <end position="178"/>
    </location>
</feature>
<feature type="helix" evidence="10">
    <location>
        <begin position="184"/>
        <end position="187"/>
    </location>
</feature>
<feature type="helix" evidence="10">
    <location>
        <begin position="188"/>
        <end position="191"/>
    </location>
</feature>
<feature type="strand" evidence="10">
    <location>
        <begin position="193"/>
        <end position="199"/>
    </location>
</feature>
<feature type="turn" evidence="10">
    <location>
        <begin position="200"/>
        <end position="202"/>
    </location>
</feature>
<feature type="strand" evidence="10">
    <location>
        <begin position="206"/>
        <end position="208"/>
    </location>
</feature>
<feature type="helix" evidence="10">
    <location>
        <begin position="210"/>
        <end position="217"/>
    </location>
</feature>
<feature type="helix" evidence="10">
    <location>
        <begin position="223"/>
        <end position="227"/>
    </location>
</feature>
<feature type="helix" evidence="10">
    <location>
        <begin position="229"/>
        <end position="234"/>
    </location>
</feature>
<feature type="strand" evidence="10">
    <location>
        <begin position="240"/>
        <end position="245"/>
    </location>
</feature>
<feature type="helix" evidence="10">
    <location>
        <begin position="246"/>
        <end position="257"/>
    </location>
</feature>
<feature type="helix" evidence="10">
    <location>
        <begin position="280"/>
        <end position="282"/>
    </location>
</feature>
<feature type="helix" evidence="10">
    <location>
        <begin position="283"/>
        <end position="286"/>
    </location>
</feature>
<feature type="helix" evidence="10">
    <location>
        <begin position="298"/>
        <end position="304"/>
    </location>
</feature>
<feature type="helix" evidence="10">
    <location>
        <begin position="306"/>
        <end position="308"/>
    </location>
</feature>
<feature type="strand" evidence="10">
    <location>
        <begin position="311"/>
        <end position="314"/>
    </location>
</feature>
<feature type="strand" evidence="10">
    <location>
        <begin position="321"/>
        <end position="328"/>
    </location>
</feature>
<feature type="strand" evidence="10">
    <location>
        <begin position="331"/>
        <end position="338"/>
    </location>
</feature>
<feature type="strand" evidence="10">
    <location>
        <begin position="340"/>
        <end position="342"/>
    </location>
</feature>
<feature type="helix" evidence="10">
    <location>
        <begin position="344"/>
        <end position="360"/>
    </location>
</feature>
<feature type="strand" evidence="10">
    <location>
        <begin position="364"/>
        <end position="370"/>
    </location>
</feature>
<feature type="helix" evidence="10">
    <location>
        <begin position="377"/>
        <end position="381"/>
    </location>
</feature>
<feature type="helix" evidence="10">
    <location>
        <begin position="384"/>
        <end position="397"/>
    </location>
</feature>
<feature type="strand" evidence="10">
    <location>
        <begin position="402"/>
        <end position="411"/>
    </location>
</feature>
<feature type="helix" evidence="10">
    <location>
        <begin position="413"/>
        <end position="417"/>
    </location>
</feature>
<feature type="helix" evidence="10">
    <location>
        <begin position="421"/>
        <end position="423"/>
    </location>
</feature>
<feature type="strand" evidence="10">
    <location>
        <begin position="426"/>
        <end position="430"/>
    </location>
</feature>
<feature type="strand" evidence="10">
    <location>
        <begin position="435"/>
        <end position="439"/>
    </location>
</feature>
<feature type="helix" evidence="10">
    <location>
        <begin position="441"/>
        <end position="458"/>
    </location>
</feature>
<feature type="helix" evidence="10">
    <location>
        <begin position="465"/>
        <end position="483"/>
    </location>
</feature>
<feature type="helix" evidence="10">
    <location>
        <begin position="485"/>
        <end position="490"/>
    </location>
</feature>
<feature type="strand" evidence="10">
    <location>
        <begin position="493"/>
        <end position="495"/>
    </location>
</feature>
<feature type="helix" evidence="10">
    <location>
        <begin position="500"/>
        <end position="502"/>
    </location>
</feature>
<feature type="helix" evidence="10">
    <location>
        <begin position="503"/>
        <end position="514"/>
    </location>
</feature>
<comment type="function">
    <text evidence="4">Component of a biotin-dependent acyl-CoA carboxylase complex. This subunit transfers the CO2 from carboxybiotin to the CoA ester substrate (PubMed:25695631). When associated with the alpha1 subunit AccA1, is involved in branched amino-acid catabolism with methylcrotonyl coenzyme A as the substrate (PubMed:25695631). Shows residual with propionyl-CoA and acetyl-CoA (PubMed:25695631).</text>
</comment>
<comment type="catalytic activity">
    <reaction evidence="4">
        <text>3-methylbut-2-enoyl-CoA + N(6)-carboxybiotinyl-L-lysyl-[protein] = 3-methyl-(2E)-glutaconyl-CoA + N(6)-biotinyl-L-lysyl-[protein]</text>
        <dbReference type="Rhea" id="RHEA:13025"/>
        <dbReference type="Rhea" id="RHEA-COMP:10505"/>
        <dbReference type="Rhea" id="RHEA-COMP:10506"/>
        <dbReference type="ChEBI" id="CHEBI:57344"/>
        <dbReference type="ChEBI" id="CHEBI:57346"/>
        <dbReference type="ChEBI" id="CHEBI:83144"/>
        <dbReference type="ChEBI" id="CHEBI:83145"/>
    </reaction>
    <physiologicalReaction direction="left-to-right" evidence="4">
        <dbReference type="Rhea" id="RHEA:13026"/>
    </physiologicalReaction>
</comment>
<comment type="pathway">
    <text evidence="4">Amino-acid degradation; L-leucine degradation.</text>
</comment>
<comment type="subunit">
    <text evidence="4">The biotin-dependent acyl-CoA carboxylase complex is composed of AccA1, which contains the biotin carboxylase (BC) and biotin carboxyl carrier protein (BCCP) domains, and AccD1, which contains the carboxyl transferase (CT) domain (PubMed:25695631). The AccA1/AccD1 complex forms a dodecamer (PubMed:25695631).</text>
</comment>
<comment type="induction">
    <text evidence="3">Does not show significant changes in expression throughout M.tuberculosis growth phases.</text>
</comment>
<comment type="similarity">
    <text evidence="7">Belongs to the AccD/PCCB family.</text>
</comment>
<accession>I6YDK7</accession>